<evidence type="ECO:0000255" key="1">
    <source>
        <dbReference type="HAMAP-Rule" id="MF_00435"/>
    </source>
</evidence>
<evidence type="ECO:0000255" key="2">
    <source>
        <dbReference type="PROSITE-ProRule" id="PRU01197"/>
    </source>
</evidence>
<evidence type="ECO:0000255" key="3">
    <source>
        <dbReference type="PROSITE-ProRule" id="PRU01198"/>
    </source>
</evidence>
<sequence length="335" mass="36867">MVEMFYDKDADLGALKGKIIAVMGYGSQGHAQAQNLHDSGLDVVIGLREGSRRWKQAEDDGLKVMTVADAAKAADVVQILLPDEIQSKVYYSEIEPGLEAGNSLVFSHGFNIHYNQIVPSKDLDVYMVAPKSPGHLVRRTYKEGAGVPGLIAVYQDASGNALEMALAHAKGVGCTRAGVIETTFREETETDLFGEQVDLCGGVASLIKTSFEVLVEAGYQPEMAYFETLHELKLIVDLIHEGGLEKMWYSVSNTAEYGGLTVGPQIINEESREAMYVALERIQNGEFAREFVLEGQTNHAVLTSMERLEKEHPVEVVGKKLRAMMPWLNSELNEE</sequence>
<organism>
    <name type="scientific">Methanococcoides burtonii (strain DSM 6242 / NBRC 107633 / OCM 468 / ACE-M)</name>
    <dbReference type="NCBI Taxonomy" id="259564"/>
    <lineage>
        <taxon>Archaea</taxon>
        <taxon>Methanobacteriati</taxon>
        <taxon>Methanobacteriota</taxon>
        <taxon>Stenosarchaea group</taxon>
        <taxon>Methanomicrobia</taxon>
        <taxon>Methanosarcinales</taxon>
        <taxon>Methanosarcinaceae</taxon>
        <taxon>Methanococcoides</taxon>
    </lineage>
</organism>
<gene>
    <name evidence="1" type="primary">ilvC</name>
    <name type="ordered locus">Mbur_0708</name>
</gene>
<accession>Q12Y03</accession>
<comment type="function">
    <text evidence="1">Involved in the biosynthesis of branched-chain amino acids (BCAA). Catalyzes an alkyl-migration followed by a ketol-acid reduction of (S)-2-acetolactate (S2AL) to yield (R)-2,3-dihydroxy-isovalerate. In the isomerase reaction, S2AL is rearranged via a Mg-dependent methyl migration to produce 3-hydroxy-3-methyl-2-ketobutyrate (HMKB). In the reductase reaction, this 2-ketoacid undergoes a metal-dependent reduction by NADPH to yield (R)-2,3-dihydroxy-isovalerate.</text>
</comment>
<comment type="catalytic activity">
    <reaction evidence="1">
        <text>(2R)-2,3-dihydroxy-3-methylbutanoate + NADP(+) = (2S)-2-acetolactate + NADPH + H(+)</text>
        <dbReference type="Rhea" id="RHEA:22068"/>
        <dbReference type="ChEBI" id="CHEBI:15378"/>
        <dbReference type="ChEBI" id="CHEBI:49072"/>
        <dbReference type="ChEBI" id="CHEBI:57783"/>
        <dbReference type="ChEBI" id="CHEBI:58349"/>
        <dbReference type="ChEBI" id="CHEBI:58476"/>
        <dbReference type="EC" id="1.1.1.86"/>
    </reaction>
</comment>
<comment type="catalytic activity">
    <reaction evidence="1">
        <text>(2R,3R)-2,3-dihydroxy-3-methylpentanoate + NADP(+) = (S)-2-ethyl-2-hydroxy-3-oxobutanoate + NADPH + H(+)</text>
        <dbReference type="Rhea" id="RHEA:13493"/>
        <dbReference type="ChEBI" id="CHEBI:15378"/>
        <dbReference type="ChEBI" id="CHEBI:49256"/>
        <dbReference type="ChEBI" id="CHEBI:49258"/>
        <dbReference type="ChEBI" id="CHEBI:57783"/>
        <dbReference type="ChEBI" id="CHEBI:58349"/>
        <dbReference type="EC" id="1.1.1.86"/>
    </reaction>
</comment>
<comment type="cofactor">
    <cofactor evidence="1">
        <name>Mg(2+)</name>
        <dbReference type="ChEBI" id="CHEBI:18420"/>
    </cofactor>
    <text evidence="1">Binds 2 magnesium ions per subunit.</text>
</comment>
<comment type="pathway">
    <text evidence="1">Amino-acid biosynthesis; L-isoleucine biosynthesis; L-isoleucine from 2-oxobutanoate: step 2/4.</text>
</comment>
<comment type="pathway">
    <text evidence="1">Amino-acid biosynthesis; L-valine biosynthesis; L-valine from pyruvate: step 2/4.</text>
</comment>
<comment type="similarity">
    <text evidence="1">Belongs to the ketol-acid reductoisomerase family.</text>
</comment>
<proteinExistence type="inferred from homology"/>
<feature type="chain" id="PRO_1000050528" description="Ketol-acid reductoisomerase (NADP(+))">
    <location>
        <begin position="1"/>
        <end position="335"/>
    </location>
</feature>
<feature type="domain" description="KARI N-terminal Rossmann" evidence="2">
    <location>
        <begin position="2"/>
        <end position="182"/>
    </location>
</feature>
<feature type="domain" description="KARI C-terminal knotted" evidence="3">
    <location>
        <begin position="183"/>
        <end position="328"/>
    </location>
</feature>
<feature type="active site" evidence="1">
    <location>
        <position position="108"/>
    </location>
</feature>
<feature type="binding site" evidence="1">
    <location>
        <begin position="25"/>
        <end position="28"/>
    </location>
    <ligand>
        <name>NADP(+)</name>
        <dbReference type="ChEBI" id="CHEBI:58349"/>
    </ligand>
</feature>
<feature type="binding site" evidence="1">
    <location>
        <position position="48"/>
    </location>
    <ligand>
        <name>NADP(+)</name>
        <dbReference type="ChEBI" id="CHEBI:58349"/>
    </ligand>
</feature>
<feature type="binding site" evidence="1">
    <location>
        <position position="51"/>
    </location>
    <ligand>
        <name>NADP(+)</name>
        <dbReference type="ChEBI" id="CHEBI:58349"/>
    </ligand>
</feature>
<feature type="binding site" evidence="1">
    <location>
        <begin position="83"/>
        <end position="86"/>
    </location>
    <ligand>
        <name>NADP(+)</name>
        <dbReference type="ChEBI" id="CHEBI:58349"/>
    </ligand>
</feature>
<feature type="binding site" evidence="1">
    <location>
        <position position="134"/>
    </location>
    <ligand>
        <name>NADP(+)</name>
        <dbReference type="ChEBI" id="CHEBI:58349"/>
    </ligand>
</feature>
<feature type="binding site" evidence="1">
    <location>
        <position position="191"/>
    </location>
    <ligand>
        <name>Mg(2+)</name>
        <dbReference type="ChEBI" id="CHEBI:18420"/>
        <label>1</label>
    </ligand>
</feature>
<feature type="binding site" evidence="1">
    <location>
        <position position="191"/>
    </location>
    <ligand>
        <name>Mg(2+)</name>
        <dbReference type="ChEBI" id="CHEBI:18420"/>
        <label>2</label>
    </ligand>
</feature>
<feature type="binding site" evidence="1">
    <location>
        <position position="195"/>
    </location>
    <ligand>
        <name>Mg(2+)</name>
        <dbReference type="ChEBI" id="CHEBI:18420"/>
        <label>1</label>
    </ligand>
</feature>
<feature type="binding site" evidence="1">
    <location>
        <position position="227"/>
    </location>
    <ligand>
        <name>Mg(2+)</name>
        <dbReference type="ChEBI" id="CHEBI:18420"/>
        <label>2</label>
    </ligand>
</feature>
<feature type="binding site" evidence="1">
    <location>
        <position position="231"/>
    </location>
    <ligand>
        <name>Mg(2+)</name>
        <dbReference type="ChEBI" id="CHEBI:18420"/>
        <label>2</label>
    </ligand>
</feature>
<feature type="binding site" evidence="1">
    <location>
        <position position="252"/>
    </location>
    <ligand>
        <name>substrate</name>
    </ligand>
</feature>
<protein>
    <recommendedName>
        <fullName evidence="1">Ketol-acid reductoisomerase (NADP(+))</fullName>
        <shortName evidence="1">KARI</shortName>
        <ecNumber evidence="1">1.1.1.86</ecNumber>
    </recommendedName>
    <alternativeName>
        <fullName evidence="1">Acetohydroxy-acid isomeroreductase</fullName>
        <shortName evidence="1">AHIR</shortName>
    </alternativeName>
    <alternativeName>
        <fullName evidence="1">Alpha-keto-beta-hydroxylacyl reductoisomerase</fullName>
    </alternativeName>
    <alternativeName>
        <fullName evidence="1">Ketol-acid reductoisomerase type 1</fullName>
    </alternativeName>
    <alternativeName>
        <fullName evidence="1">Ketol-acid reductoisomerase type I</fullName>
    </alternativeName>
</protein>
<dbReference type="EC" id="1.1.1.86" evidence="1"/>
<dbReference type="EMBL" id="CP000300">
    <property type="protein sequence ID" value="ABE51673.1"/>
    <property type="molecule type" value="Genomic_DNA"/>
</dbReference>
<dbReference type="RefSeq" id="WP_011498831.1">
    <property type="nucleotide sequence ID" value="NC_007955.1"/>
</dbReference>
<dbReference type="SMR" id="Q12Y03"/>
<dbReference type="STRING" id="259564.Mbur_0708"/>
<dbReference type="GeneID" id="3996612"/>
<dbReference type="KEGG" id="mbu:Mbur_0708"/>
<dbReference type="HOGENOM" id="CLU_033821_0_1_2"/>
<dbReference type="OrthoDB" id="6064at2157"/>
<dbReference type="UniPathway" id="UPA00047">
    <property type="reaction ID" value="UER00056"/>
</dbReference>
<dbReference type="UniPathway" id="UPA00049">
    <property type="reaction ID" value="UER00060"/>
</dbReference>
<dbReference type="Proteomes" id="UP000001979">
    <property type="component" value="Chromosome"/>
</dbReference>
<dbReference type="GO" id="GO:0004455">
    <property type="term" value="F:ketol-acid reductoisomerase activity"/>
    <property type="evidence" value="ECO:0007669"/>
    <property type="project" value="UniProtKB-UniRule"/>
</dbReference>
<dbReference type="GO" id="GO:0000287">
    <property type="term" value="F:magnesium ion binding"/>
    <property type="evidence" value="ECO:0007669"/>
    <property type="project" value="UniProtKB-UniRule"/>
</dbReference>
<dbReference type="GO" id="GO:0050661">
    <property type="term" value="F:NADP binding"/>
    <property type="evidence" value="ECO:0007669"/>
    <property type="project" value="InterPro"/>
</dbReference>
<dbReference type="GO" id="GO:0009097">
    <property type="term" value="P:isoleucine biosynthetic process"/>
    <property type="evidence" value="ECO:0007669"/>
    <property type="project" value="UniProtKB-UniRule"/>
</dbReference>
<dbReference type="GO" id="GO:0009099">
    <property type="term" value="P:L-valine biosynthetic process"/>
    <property type="evidence" value="ECO:0007669"/>
    <property type="project" value="UniProtKB-UniRule"/>
</dbReference>
<dbReference type="FunFam" id="3.40.50.720:FF:000023">
    <property type="entry name" value="Ketol-acid reductoisomerase (NADP(+))"/>
    <property type="match status" value="1"/>
</dbReference>
<dbReference type="Gene3D" id="6.10.240.10">
    <property type="match status" value="1"/>
</dbReference>
<dbReference type="Gene3D" id="3.40.50.720">
    <property type="entry name" value="NAD(P)-binding Rossmann-like Domain"/>
    <property type="match status" value="1"/>
</dbReference>
<dbReference type="HAMAP" id="MF_00435">
    <property type="entry name" value="IlvC"/>
    <property type="match status" value="1"/>
</dbReference>
<dbReference type="InterPro" id="IPR008927">
    <property type="entry name" value="6-PGluconate_DH-like_C_sf"/>
</dbReference>
<dbReference type="InterPro" id="IPR013023">
    <property type="entry name" value="KARI"/>
</dbReference>
<dbReference type="InterPro" id="IPR000506">
    <property type="entry name" value="KARI_C"/>
</dbReference>
<dbReference type="InterPro" id="IPR013116">
    <property type="entry name" value="KARI_N"/>
</dbReference>
<dbReference type="InterPro" id="IPR014359">
    <property type="entry name" value="KARI_prok"/>
</dbReference>
<dbReference type="InterPro" id="IPR036291">
    <property type="entry name" value="NAD(P)-bd_dom_sf"/>
</dbReference>
<dbReference type="NCBIfam" id="TIGR00465">
    <property type="entry name" value="ilvC"/>
    <property type="match status" value="1"/>
</dbReference>
<dbReference type="NCBIfam" id="NF004017">
    <property type="entry name" value="PRK05479.1"/>
    <property type="match status" value="1"/>
</dbReference>
<dbReference type="NCBIfam" id="NF009940">
    <property type="entry name" value="PRK13403.1"/>
    <property type="match status" value="1"/>
</dbReference>
<dbReference type="PANTHER" id="PTHR21371">
    <property type="entry name" value="KETOL-ACID REDUCTOISOMERASE, MITOCHONDRIAL"/>
    <property type="match status" value="1"/>
</dbReference>
<dbReference type="PANTHER" id="PTHR21371:SF1">
    <property type="entry name" value="KETOL-ACID REDUCTOISOMERASE, MITOCHONDRIAL"/>
    <property type="match status" value="1"/>
</dbReference>
<dbReference type="Pfam" id="PF01450">
    <property type="entry name" value="KARI_C"/>
    <property type="match status" value="1"/>
</dbReference>
<dbReference type="Pfam" id="PF07991">
    <property type="entry name" value="KARI_N"/>
    <property type="match status" value="1"/>
</dbReference>
<dbReference type="PIRSF" id="PIRSF000116">
    <property type="entry name" value="IlvC_gammaproteo"/>
    <property type="match status" value="1"/>
</dbReference>
<dbReference type="SUPFAM" id="SSF48179">
    <property type="entry name" value="6-phosphogluconate dehydrogenase C-terminal domain-like"/>
    <property type="match status" value="1"/>
</dbReference>
<dbReference type="SUPFAM" id="SSF51735">
    <property type="entry name" value="NAD(P)-binding Rossmann-fold domains"/>
    <property type="match status" value="1"/>
</dbReference>
<dbReference type="PROSITE" id="PS51851">
    <property type="entry name" value="KARI_C"/>
    <property type="match status" value="1"/>
</dbReference>
<dbReference type="PROSITE" id="PS51850">
    <property type="entry name" value="KARI_N"/>
    <property type="match status" value="1"/>
</dbReference>
<keyword id="KW-0028">Amino-acid biosynthesis</keyword>
<keyword id="KW-0100">Branched-chain amino acid biosynthesis</keyword>
<keyword id="KW-0460">Magnesium</keyword>
<keyword id="KW-0479">Metal-binding</keyword>
<keyword id="KW-0521">NADP</keyword>
<keyword id="KW-0560">Oxidoreductase</keyword>
<reference key="1">
    <citation type="journal article" date="2009" name="ISME J.">
        <title>The genome sequence of the psychrophilic archaeon, Methanococcoides burtonii: the role of genome evolution in cold adaptation.</title>
        <authorList>
            <person name="Allen M.A."/>
            <person name="Lauro F.M."/>
            <person name="Williams T.J."/>
            <person name="Burg D."/>
            <person name="Siddiqui K.S."/>
            <person name="De Francisci D."/>
            <person name="Chong K.W."/>
            <person name="Pilak O."/>
            <person name="Chew H.H."/>
            <person name="De Maere M.Z."/>
            <person name="Ting L."/>
            <person name="Katrib M."/>
            <person name="Ng C."/>
            <person name="Sowers K.R."/>
            <person name="Galperin M.Y."/>
            <person name="Anderson I.J."/>
            <person name="Ivanova N."/>
            <person name="Dalin E."/>
            <person name="Martinez M."/>
            <person name="Lapidus A."/>
            <person name="Hauser L."/>
            <person name="Land M."/>
            <person name="Thomas T."/>
            <person name="Cavicchioli R."/>
        </authorList>
    </citation>
    <scope>NUCLEOTIDE SEQUENCE [LARGE SCALE GENOMIC DNA]</scope>
    <source>
        <strain>DSM 6242 / NBRC 107633 / OCM 468 / ACE-M</strain>
    </source>
</reference>
<name>ILVC_METBU</name>